<sequence>MPTINQLVRKPRQKVVAKSKVPALESCPQKRGVCTRVYTTTPKKPNSALRKVAKVRLTNGYEVISYIGGEGHNLQEHSVVLLRGGRVKDLPGVRYHMVRGSLDTAGVKDRKQARSKYGAKRPKAA</sequence>
<protein>
    <recommendedName>
        <fullName evidence="2">Small ribosomal subunit protein uS12</fullName>
    </recommendedName>
    <alternativeName>
        <fullName evidence="4">30S ribosomal protein S12</fullName>
    </alternativeName>
</protein>
<organism>
    <name type="scientific">Methylobacillus flagellatus (strain ATCC 51484 / DSM 6875 / VKM B-1610 / KT)</name>
    <dbReference type="NCBI Taxonomy" id="265072"/>
    <lineage>
        <taxon>Bacteria</taxon>
        <taxon>Pseudomonadati</taxon>
        <taxon>Pseudomonadota</taxon>
        <taxon>Betaproteobacteria</taxon>
        <taxon>Nitrosomonadales</taxon>
        <taxon>Methylophilaceae</taxon>
        <taxon>Methylobacillus</taxon>
    </lineage>
</organism>
<comment type="function">
    <text evidence="2">With S4 and S5 plays an important role in translational accuracy.</text>
</comment>
<comment type="function">
    <text evidence="2">Interacts with and stabilizes bases of the 16S rRNA that are involved in tRNA selection in the A site and with the mRNA backbone. Located at the interface of the 30S and 50S subunits, it traverses the body of the 30S subunit contacting proteins on the other side and probably holding the rRNA structure together. The combined cluster of proteins S8, S12 and S17 appears to hold together the shoulder and platform of the 30S subunit.</text>
</comment>
<comment type="subunit">
    <text evidence="2">Part of the 30S ribosomal subunit. Contacts proteins S8 and S17. May interact with IF1 in the 30S initiation complex.</text>
</comment>
<comment type="similarity">
    <text evidence="2">Belongs to the universal ribosomal protein uS12 family.</text>
</comment>
<proteinExistence type="inferred from homology"/>
<dbReference type="EMBL" id="CP000284">
    <property type="protein sequence ID" value="ABE48545.1"/>
    <property type="molecule type" value="Genomic_DNA"/>
</dbReference>
<dbReference type="RefSeq" id="WP_011478642.1">
    <property type="nucleotide sequence ID" value="NC_007947.1"/>
</dbReference>
<dbReference type="SMR" id="Q1H4P2"/>
<dbReference type="STRING" id="265072.Mfla_0274"/>
<dbReference type="KEGG" id="mfa:Mfla_0274"/>
<dbReference type="eggNOG" id="COG0048">
    <property type="taxonomic scope" value="Bacteria"/>
</dbReference>
<dbReference type="HOGENOM" id="CLU_104295_1_2_4"/>
<dbReference type="OrthoDB" id="9802366at2"/>
<dbReference type="Proteomes" id="UP000002440">
    <property type="component" value="Chromosome"/>
</dbReference>
<dbReference type="GO" id="GO:0015935">
    <property type="term" value="C:small ribosomal subunit"/>
    <property type="evidence" value="ECO:0007669"/>
    <property type="project" value="InterPro"/>
</dbReference>
<dbReference type="GO" id="GO:0019843">
    <property type="term" value="F:rRNA binding"/>
    <property type="evidence" value="ECO:0007669"/>
    <property type="project" value="UniProtKB-UniRule"/>
</dbReference>
<dbReference type="GO" id="GO:0003735">
    <property type="term" value="F:structural constituent of ribosome"/>
    <property type="evidence" value="ECO:0007669"/>
    <property type="project" value="InterPro"/>
</dbReference>
<dbReference type="GO" id="GO:0000049">
    <property type="term" value="F:tRNA binding"/>
    <property type="evidence" value="ECO:0007669"/>
    <property type="project" value="UniProtKB-UniRule"/>
</dbReference>
<dbReference type="GO" id="GO:0006412">
    <property type="term" value="P:translation"/>
    <property type="evidence" value="ECO:0007669"/>
    <property type="project" value="UniProtKB-UniRule"/>
</dbReference>
<dbReference type="CDD" id="cd03368">
    <property type="entry name" value="Ribosomal_S12"/>
    <property type="match status" value="1"/>
</dbReference>
<dbReference type="FunFam" id="2.40.50.140:FF:000001">
    <property type="entry name" value="30S ribosomal protein S12"/>
    <property type="match status" value="1"/>
</dbReference>
<dbReference type="Gene3D" id="2.40.50.140">
    <property type="entry name" value="Nucleic acid-binding proteins"/>
    <property type="match status" value="1"/>
</dbReference>
<dbReference type="HAMAP" id="MF_00403_B">
    <property type="entry name" value="Ribosomal_uS12_B"/>
    <property type="match status" value="1"/>
</dbReference>
<dbReference type="InterPro" id="IPR012340">
    <property type="entry name" value="NA-bd_OB-fold"/>
</dbReference>
<dbReference type="InterPro" id="IPR006032">
    <property type="entry name" value="Ribosomal_uS12"/>
</dbReference>
<dbReference type="InterPro" id="IPR005679">
    <property type="entry name" value="Ribosomal_uS12_bac"/>
</dbReference>
<dbReference type="NCBIfam" id="TIGR00981">
    <property type="entry name" value="rpsL_bact"/>
    <property type="match status" value="1"/>
</dbReference>
<dbReference type="PANTHER" id="PTHR11652">
    <property type="entry name" value="30S RIBOSOMAL PROTEIN S12 FAMILY MEMBER"/>
    <property type="match status" value="1"/>
</dbReference>
<dbReference type="Pfam" id="PF00164">
    <property type="entry name" value="Ribosom_S12_S23"/>
    <property type="match status" value="1"/>
</dbReference>
<dbReference type="PIRSF" id="PIRSF002133">
    <property type="entry name" value="Ribosomal_S12/S23"/>
    <property type="match status" value="1"/>
</dbReference>
<dbReference type="PRINTS" id="PR01034">
    <property type="entry name" value="RIBOSOMALS12"/>
</dbReference>
<dbReference type="SUPFAM" id="SSF50249">
    <property type="entry name" value="Nucleic acid-binding proteins"/>
    <property type="match status" value="1"/>
</dbReference>
<dbReference type="PROSITE" id="PS00055">
    <property type="entry name" value="RIBOSOMAL_S12"/>
    <property type="match status" value="1"/>
</dbReference>
<keyword id="KW-0488">Methylation</keyword>
<keyword id="KW-1185">Reference proteome</keyword>
<keyword id="KW-0687">Ribonucleoprotein</keyword>
<keyword id="KW-0689">Ribosomal protein</keyword>
<keyword id="KW-0694">RNA-binding</keyword>
<keyword id="KW-0699">rRNA-binding</keyword>
<keyword id="KW-0820">tRNA-binding</keyword>
<feature type="chain" id="PRO_0000263570" description="Small ribosomal subunit protein uS12">
    <location>
        <begin position="1"/>
        <end position="125"/>
    </location>
</feature>
<feature type="region of interest" description="Disordered" evidence="3">
    <location>
        <begin position="105"/>
        <end position="125"/>
    </location>
</feature>
<feature type="compositionally biased region" description="Basic residues" evidence="3">
    <location>
        <begin position="113"/>
        <end position="125"/>
    </location>
</feature>
<feature type="modified residue" description="3-methylthioaspartic acid" evidence="1">
    <location>
        <position position="89"/>
    </location>
</feature>
<evidence type="ECO:0000250" key="1"/>
<evidence type="ECO:0000255" key="2">
    <source>
        <dbReference type="HAMAP-Rule" id="MF_00403"/>
    </source>
</evidence>
<evidence type="ECO:0000256" key="3">
    <source>
        <dbReference type="SAM" id="MobiDB-lite"/>
    </source>
</evidence>
<evidence type="ECO:0000305" key="4"/>
<accession>Q1H4P2</accession>
<name>RS12_METFK</name>
<gene>
    <name evidence="2" type="primary">rpsL</name>
    <name type="ordered locus">Mfla_0274</name>
</gene>
<reference key="1">
    <citation type="submission" date="2006-03" db="EMBL/GenBank/DDBJ databases">
        <title>Complete sequence of Methylobacillus flagellatus KT.</title>
        <authorList>
            <consortium name="US DOE Joint Genome Institute"/>
            <person name="Copeland A."/>
            <person name="Lucas S."/>
            <person name="Lapidus A."/>
            <person name="Barry K."/>
            <person name="Detter J.C."/>
            <person name="Glavina del Rio T."/>
            <person name="Hammon N."/>
            <person name="Israni S."/>
            <person name="Dalin E."/>
            <person name="Tice H."/>
            <person name="Pitluck S."/>
            <person name="Brettin T."/>
            <person name="Bruce D."/>
            <person name="Han C."/>
            <person name="Tapia R."/>
            <person name="Saunders E."/>
            <person name="Gilna P."/>
            <person name="Schmutz J."/>
            <person name="Larimer F."/>
            <person name="Land M."/>
            <person name="Kyrpides N."/>
            <person name="Anderson I."/>
            <person name="Richardson P."/>
        </authorList>
    </citation>
    <scope>NUCLEOTIDE SEQUENCE [LARGE SCALE GENOMIC DNA]</scope>
    <source>
        <strain>ATCC 51484 / DSM 6875 / VKM B-1610 / KT</strain>
    </source>
</reference>